<proteinExistence type="evidence at transcript level"/>
<organism>
    <name type="scientific">Salmo salar</name>
    <name type="common">Atlantic salmon</name>
    <dbReference type="NCBI Taxonomy" id="8030"/>
    <lineage>
        <taxon>Eukaryota</taxon>
        <taxon>Metazoa</taxon>
        <taxon>Chordata</taxon>
        <taxon>Craniata</taxon>
        <taxon>Vertebrata</taxon>
        <taxon>Euteleostomi</taxon>
        <taxon>Actinopterygii</taxon>
        <taxon>Neopterygii</taxon>
        <taxon>Teleostei</taxon>
        <taxon>Protacanthopterygii</taxon>
        <taxon>Salmoniformes</taxon>
        <taxon>Salmonidae</taxon>
        <taxon>Salmoninae</taxon>
        <taxon>Salmo</taxon>
    </lineage>
</organism>
<evidence type="ECO:0000250" key="1"/>
<evidence type="ECO:0000250" key="2">
    <source>
        <dbReference type="UniProtKB" id="Q9CZW6"/>
    </source>
</evidence>
<evidence type="ECO:0000250" key="3">
    <source>
        <dbReference type="UniProtKB" id="Q9NTX7"/>
    </source>
</evidence>
<evidence type="ECO:0000255" key="4">
    <source>
        <dbReference type="PROSITE-ProRule" id="PRU00175"/>
    </source>
</evidence>
<evidence type="ECO:0000255" key="5">
    <source>
        <dbReference type="PROSITE-ProRule" id="PRU00248"/>
    </source>
</evidence>
<evidence type="ECO:0000256" key="6">
    <source>
        <dbReference type="SAM" id="MobiDB-lite"/>
    </source>
</evidence>
<evidence type="ECO:0000305" key="7"/>
<dbReference type="EC" id="2.3.2.27"/>
<dbReference type="EMBL" id="BT059789">
    <property type="protein sequence ID" value="ACN11502.1"/>
    <property type="molecule type" value="mRNA"/>
</dbReference>
<dbReference type="RefSeq" id="NP_001167373.1">
    <property type="nucleotide sequence ID" value="NM_001173902.1"/>
</dbReference>
<dbReference type="RefSeq" id="XP_014013865.1">
    <property type="nucleotide sequence ID" value="XM_014158390.1"/>
</dbReference>
<dbReference type="SMR" id="C0HBT3"/>
<dbReference type="STRING" id="8030.ENSSSAP00000050837"/>
<dbReference type="PaxDb" id="8030-ENSSSAP00000050837"/>
<dbReference type="Ensembl" id="ENSSSAT00020008352">
    <property type="protein sequence ID" value="ENSSSAP00020007617"/>
    <property type="gene ID" value="ENSSSAG00020003091"/>
</dbReference>
<dbReference type="GeneID" id="100380617"/>
<dbReference type="KEGG" id="sasa:100380617"/>
<dbReference type="CTD" id="100380617"/>
<dbReference type="OMA" id="KMAGCGE"/>
<dbReference type="OrthoDB" id="531469at7898"/>
<dbReference type="UniPathway" id="UPA00143"/>
<dbReference type="Proteomes" id="UP000087266">
    <property type="component" value="Chromosome ssa02"/>
</dbReference>
<dbReference type="Bgee" id="ENSSSAG00000050752">
    <property type="expression patterns" value="Expressed in ovary and 25 other cell types or tissues"/>
</dbReference>
<dbReference type="GO" id="GO:0005829">
    <property type="term" value="C:cytosol"/>
    <property type="evidence" value="ECO:0000250"/>
    <property type="project" value="UniProtKB"/>
</dbReference>
<dbReference type="GO" id="GO:0005634">
    <property type="term" value="C:nucleus"/>
    <property type="evidence" value="ECO:0007669"/>
    <property type="project" value="UniProtKB-SubCell"/>
</dbReference>
<dbReference type="GO" id="GO:0072572">
    <property type="term" value="F:poly-ADP-D-ribose binding"/>
    <property type="evidence" value="ECO:0000250"/>
    <property type="project" value="UniProtKB"/>
</dbReference>
<dbReference type="GO" id="GO:0061630">
    <property type="term" value="F:ubiquitin protein ligase activity"/>
    <property type="evidence" value="ECO:0007669"/>
    <property type="project" value="InterPro"/>
</dbReference>
<dbReference type="GO" id="GO:0004842">
    <property type="term" value="F:ubiquitin-protein transferase activity"/>
    <property type="evidence" value="ECO:0000250"/>
    <property type="project" value="UniProtKB"/>
</dbReference>
<dbReference type="GO" id="GO:0008270">
    <property type="term" value="F:zinc ion binding"/>
    <property type="evidence" value="ECO:0007669"/>
    <property type="project" value="UniProtKB-KW"/>
</dbReference>
<dbReference type="GO" id="GO:0090263">
    <property type="term" value="P:positive regulation of canonical Wnt signaling pathway"/>
    <property type="evidence" value="ECO:0000250"/>
    <property type="project" value="UniProtKB"/>
</dbReference>
<dbReference type="GO" id="GO:0051865">
    <property type="term" value="P:protein autoubiquitination"/>
    <property type="evidence" value="ECO:0000250"/>
    <property type="project" value="UniProtKB"/>
</dbReference>
<dbReference type="GO" id="GO:0070936">
    <property type="term" value="P:protein K48-linked ubiquitination"/>
    <property type="evidence" value="ECO:0000250"/>
    <property type="project" value="UniProtKB"/>
</dbReference>
<dbReference type="GO" id="GO:0006511">
    <property type="term" value="P:ubiquitin-dependent protein catabolic process"/>
    <property type="evidence" value="ECO:0000250"/>
    <property type="project" value="UniProtKB"/>
</dbReference>
<dbReference type="GO" id="GO:0016055">
    <property type="term" value="P:Wnt signaling pathway"/>
    <property type="evidence" value="ECO:0007669"/>
    <property type="project" value="UniProtKB-KW"/>
</dbReference>
<dbReference type="CDD" id="cd16546">
    <property type="entry name" value="RING-HC_RNF146"/>
    <property type="match status" value="1"/>
</dbReference>
<dbReference type="FunFam" id="3.30.720.50:FF:000003">
    <property type="entry name" value="E3 ubiquitin-protein ligase RNF146"/>
    <property type="match status" value="1"/>
</dbReference>
<dbReference type="FunFam" id="3.30.40.10:FF:000772">
    <property type="entry name" value="E3 ubiquitin-protein ligase rnf146"/>
    <property type="match status" value="1"/>
</dbReference>
<dbReference type="Gene3D" id="3.30.720.50">
    <property type="match status" value="1"/>
</dbReference>
<dbReference type="Gene3D" id="3.30.40.10">
    <property type="entry name" value="Zinc/RING finger domain, C3HC4 (zinc finger)"/>
    <property type="match status" value="1"/>
</dbReference>
<dbReference type="InterPro" id="IPR044110">
    <property type="entry name" value="RING-HC_RNF146"/>
</dbReference>
<dbReference type="InterPro" id="IPR033509">
    <property type="entry name" value="RNF146"/>
</dbReference>
<dbReference type="InterPro" id="IPR018123">
    <property type="entry name" value="WWE-dom_subgr"/>
</dbReference>
<dbReference type="InterPro" id="IPR004170">
    <property type="entry name" value="WWE_dom"/>
</dbReference>
<dbReference type="InterPro" id="IPR037197">
    <property type="entry name" value="WWE_dom_sf"/>
</dbReference>
<dbReference type="InterPro" id="IPR001841">
    <property type="entry name" value="Znf_RING"/>
</dbReference>
<dbReference type="InterPro" id="IPR013083">
    <property type="entry name" value="Znf_RING/FYVE/PHD"/>
</dbReference>
<dbReference type="InterPro" id="IPR017907">
    <property type="entry name" value="Znf_RING_CS"/>
</dbReference>
<dbReference type="PANTHER" id="PTHR13417">
    <property type="entry name" value="E3 UBIQUITIN-PROTEIN LIGASE RNF146"/>
    <property type="match status" value="1"/>
</dbReference>
<dbReference type="PANTHER" id="PTHR13417:SF2">
    <property type="entry name" value="E3 UBIQUITIN-PROTEIN LIGASE RNF146"/>
    <property type="match status" value="1"/>
</dbReference>
<dbReference type="Pfam" id="PF02825">
    <property type="entry name" value="WWE"/>
    <property type="match status" value="1"/>
</dbReference>
<dbReference type="Pfam" id="PF13920">
    <property type="entry name" value="zf-C3HC4_3"/>
    <property type="match status" value="1"/>
</dbReference>
<dbReference type="SMART" id="SM00184">
    <property type="entry name" value="RING"/>
    <property type="match status" value="1"/>
</dbReference>
<dbReference type="SMART" id="SM00678">
    <property type="entry name" value="WWE"/>
    <property type="match status" value="1"/>
</dbReference>
<dbReference type="SUPFAM" id="SSF57850">
    <property type="entry name" value="RING/U-box"/>
    <property type="match status" value="1"/>
</dbReference>
<dbReference type="SUPFAM" id="SSF117839">
    <property type="entry name" value="WWE domain"/>
    <property type="match status" value="1"/>
</dbReference>
<dbReference type="PROSITE" id="PS50918">
    <property type="entry name" value="WWE"/>
    <property type="match status" value="1"/>
</dbReference>
<dbReference type="PROSITE" id="PS00518">
    <property type="entry name" value="ZF_RING_1"/>
    <property type="match status" value="1"/>
</dbReference>
<dbReference type="PROSITE" id="PS50089">
    <property type="entry name" value="ZF_RING_2"/>
    <property type="match status" value="1"/>
</dbReference>
<name>RN146_SALSA</name>
<feature type="chain" id="PRO_0000409506" description="E3 ubiquitin-protein ligase rnf146">
    <location>
        <begin position="1"/>
        <end position="349"/>
    </location>
</feature>
<feature type="domain" description="WWE" evidence="5">
    <location>
        <begin position="97"/>
        <end position="173"/>
    </location>
</feature>
<feature type="zinc finger region" description="RING-type" evidence="4">
    <location>
        <begin position="41"/>
        <end position="79"/>
    </location>
</feature>
<feature type="region of interest" description="Disordered" evidence="6">
    <location>
        <begin position="1"/>
        <end position="21"/>
    </location>
</feature>
<feature type="region of interest" description="Disordered" evidence="6">
    <location>
        <begin position="226"/>
        <end position="251"/>
    </location>
</feature>
<feature type="region of interest" description="Disordered" evidence="6">
    <location>
        <begin position="264"/>
        <end position="349"/>
    </location>
</feature>
<feature type="compositionally biased region" description="Low complexity" evidence="6">
    <location>
        <begin position="10"/>
        <end position="21"/>
    </location>
</feature>
<feature type="compositionally biased region" description="Polar residues" evidence="6">
    <location>
        <begin position="283"/>
        <end position="292"/>
    </location>
</feature>
<feature type="compositionally biased region" description="Acidic residues" evidence="6">
    <location>
        <begin position="298"/>
        <end position="307"/>
    </location>
</feature>
<feature type="compositionally biased region" description="Basic and acidic residues" evidence="6">
    <location>
        <begin position="308"/>
        <end position="317"/>
    </location>
</feature>
<feature type="binding site" evidence="1">
    <location>
        <position position="113"/>
    </location>
    <ligand>
        <name>a glycoprotein</name>
        <dbReference type="ChEBI" id="CHEBI:17089"/>
    </ligand>
    <ligandPart>
        <name>poly[(1''-&gt;2')-ADP-alpha-D-ribose] group</name>
        <dbReference type="ChEBI" id="CHEBI:157741"/>
    </ligandPart>
</feature>
<feature type="binding site" evidence="1">
    <location>
        <position position="116"/>
    </location>
    <ligand>
        <name>a glycoprotein</name>
        <dbReference type="ChEBI" id="CHEBI:17089"/>
    </ligand>
    <ligandPart>
        <name>poly[(1''-&gt;2')-ADP-alpha-D-ribose] group</name>
        <dbReference type="ChEBI" id="CHEBI:157741"/>
    </ligandPart>
</feature>
<feature type="binding site" evidence="1">
    <location>
        <position position="120"/>
    </location>
    <ligand>
        <name>a glycoprotein</name>
        <dbReference type="ChEBI" id="CHEBI:17089"/>
    </ligand>
    <ligandPart>
        <name>poly[(1''-&gt;2')-ADP-alpha-D-ribose] group</name>
        <dbReference type="ChEBI" id="CHEBI:157741"/>
    </ligandPart>
</feature>
<feature type="binding site" evidence="1">
    <location>
        <position position="150"/>
    </location>
    <ligand>
        <name>a glycoprotein</name>
        <dbReference type="ChEBI" id="CHEBI:17089"/>
    </ligand>
    <ligandPart>
        <name>poly[(1''-&gt;2')-ADP-alpha-D-ribose] group</name>
        <dbReference type="ChEBI" id="CHEBI:157741"/>
    </ligandPart>
</feature>
<feature type="binding site" evidence="1">
    <location>
        <position position="159"/>
    </location>
    <ligand>
        <name>a glycoprotein</name>
        <dbReference type="ChEBI" id="CHEBI:17089"/>
    </ligand>
    <ligandPart>
        <name>poly[(1''-&gt;2')-ADP-alpha-D-ribose] group</name>
        <dbReference type="ChEBI" id="CHEBI:157741"/>
    </ligandPart>
</feature>
<feature type="binding site" evidence="1">
    <location>
        <position position="169"/>
    </location>
    <ligand>
        <name>a glycoprotein</name>
        <dbReference type="ChEBI" id="CHEBI:17089"/>
    </ligand>
    <ligandPart>
        <name>poly[(1''-&gt;2')-ADP-alpha-D-ribose] group</name>
        <dbReference type="ChEBI" id="CHEBI:157741"/>
    </ligandPart>
</feature>
<feature type="binding site" evidence="1">
    <location>
        <position position="181"/>
    </location>
    <ligand>
        <name>a glycoprotein</name>
        <dbReference type="ChEBI" id="CHEBI:17089"/>
    </ligand>
    <ligandPart>
        <name>poly[(1''-&gt;2')-ADP-alpha-D-ribose] group</name>
        <dbReference type="ChEBI" id="CHEBI:157741"/>
    </ligandPart>
</feature>
<gene>
    <name type="primary">rnf146</name>
</gene>
<keyword id="KW-0963">Cytoplasm</keyword>
<keyword id="KW-0479">Metal-binding</keyword>
<keyword id="KW-0539">Nucleus</keyword>
<keyword id="KW-1185">Reference proteome</keyword>
<keyword id="KW-0808">Transferase</keyword>
<keyword id="KW-0833">Ubl conjugation pathway</keyword>
<keyword id="KW-0879">Wnt signaling pathway</keyword>
<keyword id="KW-0862">Zinc</keyword>
<keyword id="KW-0863">Zinc-finger</keyword>
<reference key="1">
    <citation type="journal article" date="2010" name="BMC Genomics">
        <title>Salmo salar and Esox lucius full-length cDNA sequences reveal changes in evolutionary pressures on a post-tetraploidization genome.</title>
        <authorList>
            <person name="Leong J.S."/>
            <person name="Jantzen S.G."/>
            <person name="von Schalburg K.R."/>
            <person name="Cooper G.A."/>
            <person name="Messmer A.M."/>
            <person name="Liao N.Y."/>
            <person name="Munro S."/>
            <person name="Moore R."/>
            <person name="Holt R.A."/>
            <person name="Jones S.J."/>
            <person name="Davidson W.S."/>
            <person name="Koop B.F."/>
        </authorList>
    </citation>
    <scope>NUCLEOTIDE SEQUENCE [LARGE SCALE MRNA]</scope>
    <source>
        <tissue>Brain</tissue>
    </source>
</reference>
<comment type="function">
    <text evidence="2 3">E3 ubiquitin-protein ligase that specifically binds poly-ADP-ribosylated proteins and mediates their ubiquitination and subsequent degradation. May regulate many important biological processes, such as cell survival and DNA damage response. Acts as an activator of the Wnt signaling pathway by mediating the ubiquitination of poly-ADP-ribosylated proteins. Neuroprotective protein. Protects against cell death induced by DNA damaging agents and rescues cells from G1 arrest. Promotes cell survival after gamma-irradiation. Facilitates DNA repair.</text>
</comment>
<comment type="catalytic activity">
    <reaction>
        <text>S-ubiquitinyl-[E2 ubiquitin-conjugating enzyme]-L-cysteine + [acceptor protein]-L-lysine = [E2 ubiquitin-conjugating enzyme]-L-cysteine + N(6)-ubiquitinyl-[acceptor protein]-L-lysine.</text>
        <dbReference type="EC" id="2.3.2.27"/>
    </reaction>
</comment>
<comment type="pathway">
    <text>Protein modification; protein ubiquitination.</text>
</comment>
<comment type="subcellular location">
    <subcellularLocation>
        <location evidence="1">Cytoplasm</location>
        <location evidence="1">Cytosol</location>
    </subcellularLocation>
    <subcellularLocation>
        <location evidence="1">Nucleus</location>
    </subcellularLocation>
    <text evidence="1">Translocates to the nucleus after DNA damage.</text>
</comment>
<comment type="domain">
    <text evidence="1">The WWE domain mediates non-covalent poly(ADP-ribose)-binding.</text>
</comment>
<sequence>MASCGEVDHSVSSLPSSKKGSGDSACSGSSGSSPALPVPECAICLQSCVHPVQLPCRHVFCFLCVKGASWQSKRCALCRQEVPEDFLEHPTLLSPEELKTGGRGATGDNAWYYEGRNGWWQYDERTSRELEDAFSKGKKTAEMLIAGFLYVADLENMVQYRRNEHGRRRKIKRDVVDIPKKGVAGLRLDTEGGVQGSAAAGRGNSADGADTSAAAVQQAAAAPAATTVLSAPARPPTSLGGQPGSPTSPSLEDTLALLHISPTDAPERAEVGEGEEEATATPSMSSSPNTYADGSGDWSDDEGDGEAVEPREQRLRLGESLVDRSPPGAEASSSSSVRSRRPDGQCTEV</sequence>
<protein>
    <recommendedName>
        <fullName>E3 ubiquitin-protein ligase rnf146</fullName>
        <ecNumber>2.3.2.27</ecNumber>
    </recommendedName>
    <alternativeName>
        <fullName>RING finger protein 146</fullName>
    </alternativeName>
    <alternativeName>
        <fullName evidence="7">RING-type E3 ubiquitin transferase rnf146</fullName>
    </alternativeName>
</protein>
<accession>C0HBT3</accession>